<dbReference type="EC" id="2.2.1.7" evidence="1"/>
<dbReference type="EMBL" id="CP000141">
    <property type="protein sequence ID" value="ABB16091.1"/>
    <property type="molecule type" value="Genomic_DNA"/>
</dbReference>
<dbReference type="RefSeq" id="WP_011344877.1">
    <property type="nucleotide sequence ID" value="NC_007503.1"/>
</dbReference>
<dbReference type="SMR" id="Q3AAN0"/>
<dbReference type="FunCoup" id="Q3AAN0">
    <property type="interactions" value="341"/>
</dbReference>
<dbReference type="STRING" id="246194.CHY_1985"/>
<dbReference type="KEGG" id="chy:CHY_1985"/>
<dbReference type="eggNOG" id="COG1154">
    <property type="taxonomic scope" value="Bacteria"/>
</dbReference>
<dbReference type="HOGENOM" id="CLU_009227_1_4_9"/>
<dbReference type="InParanoid" id="Q3AAN0"/>
<dbReference type="OrthoDB" id="9803371at2"/>
<dbReference type="UniPathway" id="UPA00064">
    <property type="reaction ID" value="UER00091"/>
</dbReference>
<dbReference type="Proteomes" id="UP000002706">
    <property type="component" value="Chromosome"/>
</dbReference>
<dbReference type="GO" id="GO:0005829">
    <property type="term" value="C:cytosol"/>
    <property type="evidence" value="ECO:0007669"/>
    <property type="project" value="TreeGrafter"/>
</dbReference>
<dbReference type="GO" id="GO:0008661">
    <property type="term" value="F:1-deoxy-D-xylulose-5-phosphate synthase activity"/>
    <property type="evidence" value="ECO:0007669"/>
    <property type="project" value="UniProtKB-UniRule"/>
</dbReference>
<dbReference type="GO" id="GO:0000287">
    <property type="term" value="F:magnesium ion binding"/>
    <property type="evidence" value="ECO:0007669"/>
    <property type="project" value="UniProtKB-UniRule"/>
</dbReference>
<dbReference type="GO" id="GO:0030976">
    <property type="term" value="F:thiamine pyrophosphate binding"/>
    <property type="evidence" value="ECO:0007669"/>
    <property type="project" value="UniProtKB-UniRule"/>
</dbReference>
<dbReference type="GO" id="GO:0052865">
    <property type="term" value="P:1-deoxy-D-xylulose 5-phosphate biosynthetic process"/>
    <property type="evidence" value="ECO:0007669"/>
    <property type="project" value="UniProtKB-UniPathway"/>
</dbReference>
<dbReference type="GO" id="GO:0019288">
    <property type="term" value="P:isopentenyl diphosphate biosynthetic process, methylerythritol 4-phosphate pathway"/>
    <property type="evidence" value="ECO:0007669"/>
    <property type="project" value="TreeGrafter"/>
</dbReference>
<dbReference type="GO" id="GO:0016114">
    <property type="term" value="P:terpenoid biosynthetic process"/>
    <property type="evidence" value="ECO:0007669"/>
    <property type="project" value="UniProtKB-UniRule"/>
</dbReference>
<dbReference type="GO" id="GO:0009228">
    <property type="term" value="P:thiamine biosynthetic process"/>
    <property type="evidence" value="ECO:0007669"/>
    <property type="project" value="UniProtKB-UniRule"/>
</dbReference>
<dbReference type="CDD" id="cd02007">
    <property type="entry name" value="TPP_DXS"/>
    <property type="match status" value="1"/>
</dbReference>
<dbReference type="CDD" id="cd07033">
    <property type="entry name" value="TPP_PYR_DXS_TK_like"/>
    <property type="match status" value="1"/>
</dbReference>
<dbReference type="FunFam" id="3.40.50.920:FF:000002">
    <property type="entry name" value="1-deoxy-D-xylulose-5-phosphate synthase"/>
    <property type="match status" value="1"/>
</dbReference>
<dbReference type="FunFam" id="3.40.50.970:FF:000005">
    <property type="entry name" value="1-deoxy-D-xylulose-5-phosphate synthase"/>
    <property type="match status" value="1"/>
</dbReference>
<dbReference type="Gene3D" id="3.40.50.920">
    <property type="match status" value="1"/>
</dbReference>
<dbReference type="Gene3D" id="3.40.50.970">
    <property type="match status" value="2"/>
</dbReference>
<dbReference type="HAMAP" id="MF_00315">
    <property type="entry name" value="DXP_synth"/>
    <property type="match status" value="1"/>
</dbReference>
<dbReference type="InterPro" id="IPR005477">
    <property type="entry name" value="Dxylulose-5-P_synthase"/>
</dbReference>
<dbReference type="InterPro" id="IPR029061">
    <property type="entry name" value="THDP-binding"/>
</dbReference>
<dbReference type="InterPro" id="IPR009014">
    <property type="entry name" value="Transketo_C/PFOR_II"/>
</dbReference>
<dbReference type="InterPro" id="IPR005475">
    <property type="entry name" value="Transketolase-like_Pyr-bd"/>
</dbReference>
<dbReference type="InterPro" id="IPR020826">
    <property type="entry name" value="Transketolase_BS"/>
</dbReference>
<dbReference type="InterPro" id="IPR033248">
    <property type="entry name" value="Transketolase_C"/>
</dbReference>
<dbReference type="InterPro" id="IPR049557">
    <property type="entry name" value="Transketolase_CS"/>
</dbReference>
<dbReference type="NCBIfam" id="TIGR00204">
    <property type="entry name" value="dxs"/>
    <property type="match status" value="1"/>
</dbReference>
<dbReference type="NCBIfam" id="NF003933">
    <property type="entry name" value="PRK05444.2-2"/>
    <property type="match status" value="1"/>
</dbReference>
<dbReference type="PANTHER" id="PTHR43322">
    <property type="entry name" value="1-D-DEOXYXYLULOSE 5-PHOSPHATE SYNTHASE-RELATED"/>
    <property type="match status" value="1"/>
</dbReference>
<dbReference type="PANTHER" id="PTHR43322:SF5">
    <property type="entry name" value="1-DEOXY-D-XYLULOSE-5-PHOSPHATE SYNTHASE, CHLOROPLASTIC"/>
    <property type="match status" value="1"/>
</dbReference>
<dbReference type="Pfam" id="PF13292">
    <property type="entry name" value="DXP_synthase_N"/>
    <property type="match status" value="1"/>
</dbReference>
<dbReference type="Pfam" id="PF02779">
    <property type="entry name" value="Transket_pyr"/>
    <property type="match status" value="1"/>
</dbReference>
<dbReference type="Pfam" id="PF02780">
    <property type="entry name" value="Transketolase_C"/>
    <property type="match status" value="1"/>
</dbReference>
<dbReference type="SMART" id="SM00861">
    <property type="entry name" value="Transket_pyr"/>
    <property type="match status" value="1"/>
</dbReference>
<dbReference type="SUPFAM" id="SSF52518">
    <property type="entry name" value="Thiamin diphosphate-binding fold (THDP-binding)"/>
    <property type="match status" value="2"/>
</dbReference>
<dbReference type="SUPFAM" id="SSF52922">
    <property type="entry name" value="TK C-terminal domain-like"/>
    <property type="match status" value="1"/>
</dbReference>
<dbReference type="PROSITE" id="PS00801">
    <property type="entry name" value="TRANSKETOLASE_1"/>
    <property type="match status" value="1"/>
</dbReference>
<dbReference type="PROSITE" id="PS00802">
    <property type="entry name" value="TRANSKETOLASE_2"/>
    <property type="match status" value="1"/>
</dbReference>
<proteinExistence type="inferred from homology"/>
<reference key="1">
    <citation type="journal article" date="2005" name="PLoS Genet.">
        <title>Life in hot carbon monoxide: the complete genome sequence of Carboxydothermus hydrogenoformans Z-2901.</title>
        <authorList>
            <person name="Wu M."/>
            <person name="Ren Q."/>
            <person name="Durkin A.S."/>
            <person name="Daugherty S.C."/>
            <person name="Brinkac L.M."/>
            <person name="Dodson R.J."/>
            <person name="Madupu R."/>
            <person name="Sullivan S.A."/>
            <person name="Kolonay J.F."/>
            <person name="Nelson W.C."/>
            <person name="Tallon L.J."/>
            <person name="Jones K.M."/>
            <person name="Ulrich L.E."/>
            <person name="Gonzalez J.M."/>
            <person name="Zhulin I.B."/>
            <person name="Robb F.T."/>
            <person name="Eisen J.A."/>
        </authorList>
    </citation>
    <scope>NUCLEOTIDE SEQUENCE [LARGE SCALE GENOMIC DNA]</scope>
    <source>
        <strain>ATCC BAA-161 / DSM 6008 / Z-2901</strain>
    </source>
</reference>
<comment type="function">
    <text evidence="1">Catalyzes the acyloin condensation reaction between C atoms 2 and 3 of pyruvate and glyceraldehyde 3-phosphate to yield 1-deoxy-D-xylulose-5-phosphate (DXP).</text>
</comment>
<comment type="catalytic activity">
    <reaction evidence="1">
        <text>D-glyceraldehyde 3-phosphate + pyruvate + H(+) = 1-deoxy-D-xylulose 5-phosphate + CO2</text>
        <dbReference type="Rhea" id="RHEA:12605"/>
        <dbReference type="ChEBI" id="CHEBI:15361"/>
        <dbReference type="ChEBI" id="CHEBI:15378"/>
        <dbReference type="ChEBI" id="CHEBI:16526"/>
        <dbReference type="ChEBI" id="CHEBI:57792"/>
        <dbReference type="ChEBI" id="CHEBI:59776"/>
        <dbReference type="EC" id="2.2.1.7"/>
    </reaction>
</comment>
<comment type="cofactor">
    <cofactor evidence="1">
        <name>Mg(2+)</name>
        <dbReference type="ChEBI" id="CHEBI:18420"/>
    </cofactor>
    <text evidence="1">Binds 1 Mg(2+) ion per subunit.</text>
</comment>
<comment type="cofactor">
    <cofactor evidence="1">
        <name>thiamine diphosphate</name>
        <dbReference type="ChEBI" id="CHEBI:58937"/>
    </cofactor>
    <text evidence="1">Binds 1 thiamine pyrophosphate per subunit.</text>
</comment>
<comment type="pathway">
    <text evidence="1">Metabolic intermediate biosynthesis; 1-deoxy-D-xylulose 5-phosphate biosynthesis; 1-deoxy-D-xylulose 5-phosphate from D-glyceraldehyde 3-phosphate and pyruvate: step 1/1.</text>
</comment>
<comment type="subunit">
    <text evidence="1">Homodimer.</text>
</comment>
<comment type="similarity">
    <text evidence="1">Belongs to the transketolase family. DXPS subfamily.</text>
</comment>
<organism>
    <name type="scientific">Carboxydothermus hydrogenoformans (strain ATCC BAA-161 / DSM 6008 / Z-2901)</name>
    <dbReference type="NCBI Taxonomy" id="246194"/>
    <lineage>
        <taxon>Bacteria</taxon>
        <taxon>Bacillati</taxon>
        <taxon>Bacillota</taxon>
        <taxon>Clostridia</taxon>
        <taxon>Thermoanaerobacterales</taxon>
        <taxon>Thermoanaerobacteraceae</taxon>
        <taxon>Carboxydothermus</taxon>
    </lineage>
</organism>
<evidence type="ECO:0000255" key="1">
    <source>
        <dbReference type="HAMAP-Rule" id="MF_00315"/>
    </source>
</evidence>
<feature type="chain" id="PRO_0000256395" description="1-deoxy-D-xylulose-5-phosphate synthase">
    <location>
        <begin position="1"/>
        <end position="622"/>
    </location>
</feature>
<feature type="binding site" evidence="1">
    <location>
        <position position="74"/>
    </location>
    <ligand>
        <name>thiamine diphosphate</name>
        <dbReference type="ChEBI" id="CHEBI:58937"/>
    </ligand>
</feature>
<feature type="binding site" evidence="1">
    <location>
        <begin position="115"/>
        <end position="117"/>
    </location>
    <ligand>
        <name>thiamine diphosphate</name>
        <dbReference type="ChEBI" id="CHEBI:58937"/>
    </ligand>
</feature>
<feature type="binding site" evidence="1">
    <location>
        <position position="146"/>
    </location>
    <ligand>
        <name>Mg(2+)</name>
        <dbReference type="ChEBI" id="CHEBI:18420"/>
    </ligand>
</feature>
<feature type="binding site" evidence="1">
    <location>
        <begin position="147"/>
        <end position="148"/>
    </location>
    <ligand>
        <name>thiamine diphosphate</name>
        <dbReference type="ChEBI" id="CHEBI:58937"/>
    </ligand>
</feature>
<feature type="binding site" evidence="1">
    <location>
        <position position="175"/>
    </location>
    <ligand>
        <name>Mg(2+)</name>
        <dbReference type="ChEBI" id="CHEBI:18420"/>
    </ligand>
</feature>
<feature type="binding site" evidence="1">
    <location>
        <position position="175"/>
    </location>
    <ligand>
        <name>thiamine diphosphate</name>
        <dbReference type="ChEBI" id="CHEBI:58937"/>
    </ligand>
</feature>
<feature type="binding site" evidence="1">
    <location>
        <position position="286"/>
    </location>
    <ligand>
        <name>thiamine diphosphate</name>
        <dbReference type="ChEBI" id="CHEBI:58937"/>
    </ligand>
</feature>
<feature type="binding site" evidence="1">
    <location>
        <position position="366"/>
    </location>
    <ligand>
        <name>thiamine diphosphate</name>
        <dbReference type="ChEBI" id="CHEBI:58937"/>
    </ligand>
</feature>
<keyword id="KW-0414">Isoprene biosynthesis</keyword>
<keyword id="KW-0460">Magnesium</keyword>
<keyword id="KW-0479">Metal-binding</keyword>
<keyword id="KW-1185">Reference proteome</keyword>
<keyword id="KW-0784">Thiamine biosynthesis</keyword>
<keyword id="KW-0786">Thiamine pyrophosphate</keyword>
<keyword id="KW-0808">Transferase</keyword>
<name>DXS_CARHZ</name>
<accession>Q3AAN0</accession>
<gene>
    <name evidence="1" type="primary">dxs</name>
    <name type="ordered locus">CHY_1985</name>
</gene>
<protein>
    <recommendedName>
        <fullName evidence="1">1-deoxy-D-xylulose-5-phosphate synthase</fullName>
        <ecNumber evidence="1">2.2.1.7</ecNumber>
    </recommendedName>
    <alternativeName>
        <fullName evidence="1">1-deoxyxylulose-5-phosphate synthase</fullName>
        <shortName evidence="1">DXP synthase</shortName>
        <shortName evidence="1">DXPS</shortName>
    </alternativeName>
</protein>
<sequence length="622" mass="68110">MGPILERISLPEDIKKLKPSELMALAQELREYIITVASQNGGHLAPSLGVVELTIALHFVFEAPKDKIIWDVGHQAYAHKILTGRKKQFKTLRTFGGLSGFPKRDESPYDAFGVGHSSTSISAALGMALARDLKGEQYEVVAVIGDGALTGGMAFEALNHAGHLQKKLIVVVNDNEMSIAQNVGALSAYLSRIRTDPKYSRGKDELEALIKKIPHIGPTMVKIGERLKDSFKYLLVPGMLFEELGFTYLGPIDGHNIKEMIEVFSRAKTFAGPVVVHVITKKGKGYHWAEENPDGFHGVGKFYISTGEPVEAPRVSFTEVFGKALVELAQDRPEVVAITAAMPTGTGLNYFAQNYPERFYDVGIAEQHAVTMAAGMACEGLKPVVAIYSTFLQRSFDQIIHDVCLQNLPVVFAVDRAGIVGEDGPTHHGIFDLSYLRMIPNLTIMVPRNEDMLRKMLFTALNHSGPVALRYPRGAAVGVELTPYEQLPIGTAEILKEGSDGVVIGVGRPLNYALKAAQKLENEGISLTVIDARFVKPLDYKLLEEVGSLHKPVITVEENVVAGGFGSAVNEYFSFRGIGTKVVNLGIADEFPPHGKVEEILNLYGLTEEKLYLKFREILSKL</sequence>